<organism>
    <name type="scientific">Yersinia pestis (strain Pestoides F)</name>
    <dbReference type="NCBI Taxonomy" id="386656"/>
    <lineage>
        <taxon>Bacteria</taxon>
        <taxon>Pseudomonadati</taxon>
        <taxon>Pseudomonadota</taxon>
        <taxon>Gammaproteobacteria</taxon>
        <taxon>Enterobacterales</taxon>
        <taxon>Yersiniaceae</taxon>
        <taxon>Yersinia</taxon>
    </lineage>
</organism>
<protein>
    <recommendedName>
        <fullName evidence="1">Enolase-phosphatase E1</fullName>
        <ecNumber evidence="1">3.1.3.77</ecNumber>
    </recommendedName>
    <alternativeName>
        <fullName evidence="1">2,3-diketo-5-methylthio-1-phosphopentane phosphatase</fullName>
    </alternativeName>
</protein>
<sequence>MIQAIVTDIEGTTTDIRFVHQVLFPYARERLTPFLRAHQQDDDIAALLVDLRREIAQPDADIETLITVLHGFMDEDRKSTVLKAIQGIIWRTGYLQADFRGHVYPEVAQQLADWHQQGLKLYVYSSGSVAAQKLLFGYSDAGDLCPLFSGYFDTHVGAKRDVSAYQKIANQLGIAPQALLFLSDIRQELDAAQLAGWHTCQLIRDLPDNDSAHPQVNRFDQIVLSLFTE</sequence>
<reference key="1">
    <citation type="submission" date="2007-02" db="EMBL/GenBank/DDBJ databases">
        <title>Complete sequence of chromosome of Yersinia pestis Pestoides F.</title>
        <authorList>
            <consortium name="US DOE Joint Genome Institute"/>
            <person name="Copeland A."/>
            <person name="Lucas S."/>
            <person name="Lapidus A."/>
            <person name="Barry K."/>
            <person name="Detter J.C."/>
            <person name="Glavina del Rio T."/>
            <person name="Hammon N."/>
            <person name="Israni S."/>
            <person name="Dalin E."/>
            <person name="Tice H."/>
            <person name="Pitluck S."/>
            <person name="Di Bartolo G."/>
            <person name="Chain P."/>
            <person name="Malfatti S."/>
            <person name="Shin M."/>
            <person name="Vergez L."/>
            <person name="Schmutz J."/>
            <person name="Larimer F."/>
            <person name="Land M."/>
            <person name="Hauser L."/>
            <person name="Worsham P."/>
            <person name="Chu M."/>
            <person name="Bearden S."/>
            <person name="Garcia E."/>
            <person name="Richardson P."/>
        </authorList>
    </citation>
    <scope>NUCLEOTIDE SEQUENCE [LARGE SCALE GENOMIC DNA]</scope>
    <source>
        <strain>Pestoides F</strain>
    </source>
</reference>
<name>MTNC_YERPP</name>
<gene>
    <name evidence="1" type="primary">mtnC</name>
    <name type="ordered locus">YPDSF_2881</name>
</gene>
<feature type="chain" id="PRO_0000357440" description="Enolase-phosphatase E1">
    <location>
        <begin position="1"/>
        <end position="229"/>
    </location>
</feature>
<proteinExistence type="inferred from homology"/>
<accession>A4TPN1</accession>
<dbReference type="EC" id="3.1.3.77" evidence="1"/>
<dbReference type="EMBL" id="CP000668">
    <property type="protein sequence ID" value="ABP41243.1"/>
    <property type="molecule type" value="Genomic_DNA"/>
</dbReference>
<dbReference type="RefSeq" id="WP_011906392.1">
    <property type="nucleotide sequence ID" value="NZ_CP009715.1"/>
</dbReference>
<dbReference type="SMR" id="A4TPN1"/>
<dbReference type="KEGG" id="ypp:YPDSF_2881"/>
<dbReference type="PATRIC" id="fig|386656.14.peg.145"/>
<dbReference type="UniPathway" id="UPA00904">
    <property type="reaction ID" value="UER00876"/>
</dbReference>
<dbReference type="UniPathway" id="UPA00904">
    <property type="reaction ID" value="UER00877"/>
</dbReference>
<dbReference type="GO" id="GO:0043715">
    <property type="term" value="F:2,3-diketo-5-methylthiopentyl-1-phosphate enolase activity"/>
    <property type="evidence" value="ECO:0007669"/>
    <property type="project" value="UniProtKB-UniRule"/>
</dbReference>
<dbReference type="GO" id="GO:0043716">
    <property type="term" value="F:2-hydroxy-3-keto-5-methylthiopentenyl-1-phosphate phosphatase activity"/>
    <property type="evidence" value="ECO:0007669"/>
    <property type="project" value="UniProtKB-UniRule"/>
</dbReference>
<dbReference type="GO" id="GO:0043874">
    <property type="term" value="F:acireductone synthase activity"/>
    <property type="evidence" value="ECO:0007669"/>
    <property type="project" value="UniProtKB-EC"/>
</dbReference>
<dbReference type="GO" id="GO:0000287">
    <property type="term" value="F:magnesium ion binding"/>
    <property type="evidence" value="ECO:0007669"/>
    <property type="project" value="UniProtKB-UniRule"/>
</dbReference>
<dbReference type="GO" id="GO:0019509">
    <property type="term" value="P:L-methionine salvage from methylthioadenosine"/>
    <property type="evidence" value="ECO:0007669"/>
    <property type="project" value="UniProtKB-UniRule"/>
</dbReference>
<dbReference type="CDD" id="cd01629">
    <property type="entry name" value="HAD_EP"/>
    <property type="match status" value="1"/>
</dbReference>
<dbReference type="Gene3D" id="1.10.720.60">
    <property type="match status" value="1"/>
</dbReference>
<dbReference type="Gene3D" id="3.40.50.1000">
    <property type="entry name" value="HAD superfamily/HAD-like"/>
    <property type="match status" value="1"/>
</dbReference>
<dbReference type="HAMAP" id="MF_01681">
    <property type="entry name" value="Salvage_MtnC"/>
    <property type="match status" value="1"/>
</dbReference>
<dbReference type="InterPro" id="IPR023943">
    <property type="entry name" value="Enolase-ppase_E1"/>
</dbReference>
<dbReference type="InterPro" id="IPR036412">
    <property type="entry name" value="HAD-like_sf"/>
</dbReference>
<dbReference type="InterPro" id="IPR006439">
    <property type="entry name" value="HAD-SF_hydro_IA"/>
</dbReference>
<dbReference type="InterPro" id="IPR023214">
    <property type="entry name" value="HAD_sf"/>
</dbReference>
<dbReference type="NCBIfam" id="TIGR01691">
    <property type="entry name" value="enolase-ppase"/>
    <property type="match status" value="1"/>
</dbReference>
<dbReference type="NCBIfam" id="TIGR01549">
    <property type="entry name" value="HAD-SF-IA-v1"/>
    <property type="match status" value="1"/>
</dbReference>
<dbReference type="PANTHER" id="PTHR20371">
    <property type="entry name" value="ENOLASE-PHOSPHATASE E1"/>
    <property type="match status" value="1"/>
</dbReference>
<dbReference type="PANTHER" id="PTHR20371:SF1">
    <property type="entry name" value="ENOLASE-PHOSPHATASE E1"/>
    <property type="match status" value="1"/>
</dbReference>
<dbReference type="Pfam" id="PF00702">
    <property type="entry name" value="Hydrolase"/>
    <property type="match status" value="1"/>
</dbReference>
<dbReference type="PRINTS" id="PR00413">
    <property type="entry name" value="HADHALOGNASE"/>
</dbReference>
<dbReference type="SFLD" id="SFLDG01129">
    <property type="entry name" value="C1.5:_HAD__Beta-PGM__Phosphata"/>
    <property type="match status" value="1"/>
</dbReference>
<dbReference type="SFLD" id="SFLDF00044">
    <property type="entry name" value="enolase-phosphatase"/>
    <property type="match status" value="1"/>
</dbReference>
<dbReference type="SUPFAM" id="SSF56784">
    <property type="entry name" value="HAD-like"/>
    <property type="match status" value="1"/>
</dbReference>
<keyword id="KW-0028">Amino-acid biosynthesis</keyword>
<keyword id="KW-0378">Hydrolase</keyword>
<keyword id="KW-0460">Magnesium</keyword>
<keyword id="KW-0479">Metal-binding</keyword>
<keyword id="KW-0486">Methionine biosynthesis</keyword>
<comment type="function">
    <text evidence="1">Bifunctional enzyme that catalyzes the enolization of 2,3-diketo-5-methylthiopentyl-1-phosphate (DK-MTP-1-P) into the intermediate 2-hydroxy-3-keto-5-methylthiopentenyl-1-phosphate (HK-MTPenyl-1-P), which is then dephosphorylated to form the acireductone 1,2-dihydroxy-3-keto-5-methylthiopentene (DHK-MTPene).</text>
</comment>
<comment type="catalytic activity">
    <reaction evidence="1">
        <text>5-methylsulfanyl-2,3-dioxopentyl phosphate + H2O = 1,2-dihydroxy-5-(methylsulfanyl)pent-1-en-3-one + phosphate</text>
        <dbReference type="Rhea" id="RHEA:21700"/>
        <dbReference type="ChEBI" id="CHEBI:15377"/>
        <dbReference type="ChEBI" id="CHEBI:43474"/>
        <dbReference type="ChEBI" id="CHEBI:49252"/>
        <dbReference type="ChEBI" id="CHEBI:58828"/>
        <dbReference type="EC" id="3.1.3.77"/>
    </reaction>
</comment>
<comment type="cofactor">
    <cofactor evidence="1">
        <name>Mg(2+)</name>
        <dbReference type="ChEBI" id="CHEBI:18420"/>
    </cofactor>
    <text evidence="1">Binds 1 Mg(2+) ion per subunit.</text>
</comment>
<comment type="pathway">
    <text evidence="1">Amino-acid biosynthesis; L-methionine biosynthesis via salvage pathway; L-methionine from S-methyl-5-thio-alpha-D-ribose 1-phosphate: step 3/6.</text>
</comment>
<comment type="pathway">
    <text evidence="1">Amino-acid biosynthesis; L-methionine biosynthesis via salvage pathway; L-methionine from S-methyl-5-thio-alpha-D-ribose 1-phosphate: step 4/6.</text>
</comment>
<comment type="subunit">
    <text evidence="1">Monomer.</text>
</comment>
<comment type="similarity">
    <text evidence="1">Belongs to the HAD-like hydrolase superfamily. MasA/MtnC family.</text>
</comment>
<evidence type="ECO:0000255" key="1">
    <source>
        <dbReference type="HAMAP-Rule" id="MF_01681"/>
    </source>
</evidence>